<gene>
    <name evidence="1" type="primary">rpsB</name>
    <name evidence="1" type="synonym">rps2</name>
    <name type="ordered locus">CYB_1534</name>
</gene>
<dbReference type="EMBL" id="CP000240">
    <property type="protein sequence ID" value="ABD02498.1"/>
    <property type="molecule type" value="Genomic_DNA"/>
</dbReference>
<dbReference type="RefSeq" id="WP_011433146.1">
    <property type="nucleotide sequence ID" value="NC_007776.1"/>
</dbReference>
<dbReference type="SMR" id="Q2JLB3"/>
<dbReference type="STRING" id="321332.CYB_1534"/>
<dbReference type="KEGG" id="cyb:CYB_1534"/>
<dbReference type="eggNOG" id="COG0052">
    <property type="taxonomic scope" value="Bacteria"/>
</dbReference>
<dbReference type="HOGENOM" id="CLU_040318_1_2_3"/>
<dbReference type="OrthoDB" id="9808036at2"/>
<dbReference type="Proteomes" id="UP000001938">
    <property type="component" value="Chromosome"/>
</dbReference>
<dbReference type="GO" id="GO:0022627">
    <property type="term" value="C:cytosolic small ribosomal subunit"/>
    <property type="evidence" value="ECO:0007669"/>
    <property type="project" value="TreeGrafter"/>
</dbReference>
<dbReference type="GO" id="GO:0003735">
    <property type="term" value="F:structural constituent of ribosome"/>
    <property type="evidence" value="ECO:0007669"/>
    <property type="project" value="InterPro"/>
</dbReference>
<dbReference type="GO" id="GO:0006412">
    <property type="term" value="P:translation"/>
    <property type="evidence" value="ECO:0007669"/>
    <property type="project" value="UniProtKB-UniRule"/>
</dbReference>
<dbReference type="CDD" id="cd01425">
    <property type="entry name" value="RPS2"/>
    <property type="match status" value="1"/>
</dbReference>
<dbReference type="FunFam" id="1.10.287.610:FF:000001">
    <property type="entry name" value="30S ribosomal protein S2"/>
    <property type="match status" value="1"/>
</dbReference>
<dbReference type="Gene3D" id="3.40.50.10490">
    <property type="entry name" value="Glucose-6-phosphate isomerase like protein, domain 1"/>
    <property type="match status" value="1"/>
</dbReference>
<dbReference type="Gene3D" id="1.10.287.610">
    <property type="entry name" value="Helix hairpin bin"/>
    <property type="match status" value="1"/>
</dbReference>
<dbReference type="HAMAP" id="MF_00291_B">
    <property type="entry name" value="Ribosomal_uS2_B"/>
    <property type="match status" value="1"/>
</dbReference>
<dbReference type="InterPro" id="IPR001865">
    <property type="entry name" value="Ribosomal_uS2"/>
</dbReference>
<dbReference type="InterPro" id="IPR005706">
    <property type="entry name" value="Ribosomal_uS2_bac/mit/plastid"/>
</dbReference>
<dbReference type="InterPro" id="IPR018130">
    <property type="entry name" value="Ribosomal_uS2_CS"/>
</dbReference>
<dbReference type="InterPro" id="IPR023591">
    <property type="entry name" value="Ribosomal_uS2_flav_dom_sf"/>
</dbReference>
<dbReference type="NCBIfam" id="TIGR01011">
    <property type="entry name" value="rpsB_bact"/>
    <property type="match status" value="1"/>
</dbReference>
<dbReference type="PANTHER" id="PTHR12534">
    <property type="entry name" value="30S RIBOSOMAL PROTEIN S2 PROKARYOTIC AND ORGANELLAR"/>
    <property type="match status" value="1"/>
</dbReference>
<dbReference type="PANTHER" id="PTHR12534:SF0">
    <property type="entry name" value="SMALL RIBOSOMAL SUBUNIT PROTEIN US2M"/>
    <property type="match status" value="1"/>
</dbReference>
<dbReference type="Pfam" id="PF00318">
    <property type="entry name" value="Ribosomal_S2"/>
    <property type="match status" value="1"/>
</dbReference>
<dbReference type="PRINTS" id="PR00395">
    <property type="entry name" value="RIBOSOMALS2"/>
</dbReference>
<dbReference type="SUPFAM" id="SSF52313">
    <property type="entry name" value="Ribosomal protein S2"/>
    <property type="match status" value="1"/>
</dbReference>
<dbReference type="PROSITE" id="PS00962">
    <property type="entry name" value="RIBOSOMAL_S2_1"/>
    <property type="match status" value="1"/>
</dbReference>
<dbReference type="PROSITE" id="PS00963">
    <property type="entry name" value="RIBOSOMAL_S2_2"/>
    <property type="match status" value="1"/>
</dbReference>
<proteinExistence type="inferred from homology"/>
<accession>Q2JLB3</accession>
<reference key="1">
    <citation type="journal article" date="2007" name="ISME J.">
        <title>Population level functional diversity in a microbial community revealed by comparative genomic and metagenomic analyses.</title>
        <authorList>
            <person name="Bhaya D."/>
            <person name="Grossman A.R."/>
            <person name="Steunou A.-S."/>
            <person name="Khuri N."/>
            <person name="Cohan F.M."/>
            <person name="Hamamura N."/>
            <person name="Melendrez M.C."/>
            <person name="Bateson M.M."/>
            <person name="Ward D.M."/>
            <person name="Heidelberg J.F."/>
        </authorList>
    </citation>
    <scope>NUCLEOTIDE SEQUENCE [LARGE SCALE GENOMIC DNA]</scope>
    <source>
        <strain>JA-2-3B'a(2-13)</strain>
    </source>
</reference>
<name>RS2_SYNJB</name>
<evidence type="ECO:0000255" key="1">
    <source>
        <dbReference type="HAMAP-Rule" id="MF_00291"/>
    </source>
</evidence>
<evidence type="ECO:0000305" key="2"/>
<sequence length="264" mass="30233">MSVVSLPQLLEAGVHFGHKASRWNPKMRPYIFTERNGIHIIDLVQTARYLNEAYEYVRDAADRGWRFLFVGTKRQAAGIIAQEARRCGSYYVNQRWLGGMLTNWATIKTRIDRLKEIEEMESSGLLDRLPKQEASRLRRELARLEKYLGGIKTMRKLPDAVIIVDQRREANAVQECIKLNIPIISLLDTNCDPDLSDIFIPSNDDAIRAIKLIVGKLADAIYEGRHGQLDTVEEDEYDYEGAMDLDDDILEDMEDEEEGEAEEG</sequence>
<keyword id="KW-1185">Reference proteome</keyword>
<keyword id="KW-0687">Ribonucleoprotein</keyword>
<keyword id="KW-0689">Ribosomal protein</keyword>
<protein>
    <recommendedName>
        <fullName evidence="1">Small ribosomal subunit protein uS2</fullName>
    </recommendedName>
    <alternativeName>
        <fullName evidence="2">30S ribosomal protein S2</fullName>
    </alternativeName>
</protein>
<feature type="chain" id="PRO_1000004101" description="Small ribosomal subunit protein uS2">
    <location>
        <begin position="1"/>
        <end position="264"/>
    </location>
</feature>
<organism>
    <name type="scientific">Synechococcus sp. (strain JA-2-3B'a(2-13))</name>
    <name type="common">Cyanobacteria bacterium Yellowstone B-Prime</name>
    <dbReference type="NCBI Taxonomy" id="321332"/>
    <lineage>
        <taxon>Bacteria</taxon>
        <taxon>Bacillati</taxon>
        <taxon>Cyanobacteriota</taxon>
        <taxon>Cyanophyceae</taxon>
        <taxon>Synechococcales</taxon>
        <taxon>Synechococcaceae</taxon>
        <taxon>Synechococcus</taxon>
    </lineage>
</organism>
<comment type="similarity">
    <text evidence="1">Belongs to the universal ribosomal protein uS2 family.</text>
</comment>